<organism>
    <name type="scientific">Paracoccidioides brasiliensis (strain Pb18)</name>
    <dbReference type="NCBI Taxonomy" id="502780"/>
    <lineage>
        <taxon>Eukaryota</taxon>
        <taxon>Fungi</taxon>
        <taxon>Dikarya</taxon>
        <taxon>Ascomycota</taxon>
        <taxon>Pezizomycotina</taxon>
        <taxon>Eurotiomycetes</taxon>
        <taxon>Eurotiomycetidae</taxon>
        <taxon>Onygenales</taxon>
        <taxon>Ajellomycetaceae</taxon>
        <taxon>Paracoccidioides</taxon>
    </lineage>
</organism>
<accession>C1GG77</accession>
<feature type="signal peptide" evidence="2">
    <location>
        <begin position="1"/>
        <end position="18"/>
    </location>
</feature>
<feature type="propeptide" id="PRO_0000407463" evidence="1">
    <location>
        <begin position="19"/>
        <end position="131"/>
    </location>
</feature>
<feature type="chain" id="PRO_0000407464" description="Carboxypeptidase Y homolog A">
    <location>
        <begin position="132"/>
        <end position="550"/>
    </location>
</feature>
<feature type="region of interest" description="Disordered" evidence="4">
    <location>
        <begin position="20"/>
        <end position="39"/>
    </location>
</feature>
<feature type="active site" evidence="3">
    <location>
        <position position="272"/>
    </location>
</feature>
<feature type="active site" evidence="3">
    <location>
        <position position="463"/>
    </location>
</feature>
<feature type="active site" evidence="3">
    <location>
        <position position="525"/>
    </location>
</feature>
<feature type="glycosylation site" description="N-linked (GlcNAc...) asparagine" evidence="2">
    <location>
        <position position="203"/>
    </location>
</feature>
<feature type="glycosylation site" description="N-linked (GlcNAc...) asparagine" evidence="2">
    <location>
        <position position="216"/>
    </location>
</feature>
<feature type="glycosylation site" description="N-linked (GlcNAc...) asparagine" evidence="2">
    <location>
        <position position="289"/>
    </location>
</feature>
<feature type="glycosylation site" description="N-linked (GlcNAc...) asparagine" evidence="2">
    <location>
        <position position="387"/>
    </location>
</feature>
<feature type="glycosylation site" description="N-linked (GlcNAc...) asparagine" evidence="2">
    <location>
        <position position="493"/>
    </location>
</feature>
<feature type="glycosylation site" description="N-linked (GlcNAc...) asparagine" evidence="2">
    <location>
        <position position="514"/>
    </location>
</feature>
<feature type="disulfide bond" evidence="1">
    <location>
        <begin position="185"/>
        <end position="424"/>
    </location>
</feature>
<feature type="disulfide bond" evidence="1">
    <location>
        <begin position="319"/>
        <end position="333"/>
    </location>
</feature>
<feature type="disulfide bond" evidence="1">
    <location>
        <begin position="343"/>
        <end position="366"/>
    </location>
</feature>
<feature type="disulfide bond" evidence="1">
    <location>
        <begin position="350"/>
        <end position="359"/>
    </location>
</feature>
<feature type="disulfide bond" evidence="1">
    <location>
        <begin position="388"/>
        <end position="394"/>
    </location>
</feature>
<sequence length="550" mass="61910">MKSLVLGLLVGSAIASGPLQHVLHAPPDPEPKPEPEPQVVKDPFEELRDTFDRLRNKAGDIWDDVMDNIPNIMSNMRPLTIPAKKFTRRPDSEWTHIVRGADLEALWVDDESGYKHRKIDGKLSQYDLRIKAVDPSDLGIDKVKQYSGYLDDNANDKHLFFWFFESRNDPFGDPVVLWLNGGPGCSSLTGMFFELGPASIDENITANYNPYSWNSNSSIIFLDQPVNVGYSYSSQAVSDTVTAAKDVYALLTLFFTQFRQYSAQDFHIAGESYAGHYIPVFASEILHHNNTNINLQSVLIGNGLTDPLSQYPFYRPMACGDGGYPSVLDSQSCQSMDNALPRCLSMIKSCYDIESTFTCLPASIYCNNALIGPYQKTGRNPYDVRTNCTGNDLCYPQLNYITEYLNKPHVMRSLGVEVDSYESCNMDINRNFLFHGDWMKPYHRLVPSLLARIPVLIYAGDADFICNWLGNKAWTEALEYPGHAKFAEAPMENLTMINSQGKNEVFGEVKSHSNLTFMRIFKAGHMTPFDSPQASLEFANSWLSGEWSEV</sequence>
<dbReference type="EC" id="3.4.16.5"/>
<dbReference type="EMBL" id="KN275964">
    <property type="protein sequence ID" value="EEH50235.1"/>
    <property type="molecule type" value="Genomic_DNA"/>
</dbReference>
<dbReference type="RefSeq" id="XP_010761848.1">
    <property type="nucleotide sequence ID" value="XM_010763546.1"/>
</dbReference>
<dbReference type="SMR" id="C1GG77"/>
<dbReference type="FunCoup" id="C1GG77">
    <property type="interactions" value="795"/>
</dbReference>
<dbReference type="STRING" id="502780.C1GG77"/>
<dbReference type="ESTHER" id="parbp-cbpya">
    <property type="family name" value="Carboxypeptidase_S10"/>
</dbReference>
<dbReference type="MEROPS" id="S10.001"/>
<dbReference type="GlyCosmos" id="C1GG77">
    <property type="glycosylation" value="6 sites, No reported glycans"/>
</dbReference>
<dbReference type="GeneID" id="22585067"/>
<dbReference type="KEGG" id="pbn:PADG_06314"/>
<dbReference type="VEuPathDB" id="FungiDB:PADG_06314"/>
<dbReference type="eggNOG" id="KOG1282">
    <property type="taxonomic scope" value="Eukaryota"/>
</dbReference>
<dbReference type="HOGENOM" id="CLU_008523_10_4_1"/>
<dbReference type="InParanoid" id="C1GG77"/>
<dbReference type="OMA" id="GDWMKPF"/>
<dbReference type="OrthoDB" id="10219at33183"/>
<dbReference type="Proteomes" id="UP000001628">
    <property type="component" value="Unassembled WGS sequence"/>
</dbReference>
<dbReference type="GO" id="GO:0000324">
    <property type="term" value="C:fungal-type vacuole"/>
    <property type="evidence" value="ECO:0007669"/>
    <property type="project" value="TreeGrafter"/>
</dbReference>
<dbReference type="GO" id="GO:0004185">
    <property type="term" value="F:serine-type carboxypeptidase activity"/>
    <property type="evidence" value="ECO:0007669"/>
    <property type="project" value="UniProtKB-EC"/>
</dbReference>
<dbReference type="GO" id="GO:0006508">
    <property type="term" value="P:proteolysis"/>
    <property type="evidence" value="ECO:0007669"/>
    <property type="project" value="UniProtKB-KW"/>
</dbReference>
<dbReference type="FunFam" id="1.10.287.410:FF:000001">
    <property type="entry name" value="Carboxypeptidase Y"/>
    <property type="match status" value="1"/>
</dbReference>
<dbReference type="Gene3D" id="1.10.287.410">
    <property type="match status" value="1"/>
</dbReference>
<dbReference type="Gene3D" id="3.40.50.1820">
    <property type="entry name" value="alpha/beta hydrolase"/>
    <property type="match status" value="1"/>
</dbReference>
<dbReference type="InterPro" id="IPR029058">
    <property type="entry name" value="AB_hydrolase_fold"/>
</dbReference>
<dbReference type="InterPro" id="IPR001563">
    <property type="entry name" value="Peptidase_S10"/>
</dbReference>
<dbReference type="InterPro" id="IPR008442">
    <property type="entry name" value="Propeptide_carboxypepY"/>
</dbReference>
<dbReference type="InterPro" id="IPR018202">
    <property type="entry name" value="Ser_caboxypep_ser_AS"/>
</dbReference>
<dbReference type="PANTHER" id="PTHR11802:SF113">
    <property type="entry name" value="SERINE CARBOXYPEPTIDASE CTSA-4.1"/>
    <property type="match status" value="1"/>
</dbReference>
<dbReference type="PANTHER" id="PTHR11802">
    <property type="entry name" value="SERINE PROTEASE FAMILY S10 SERINE CARBOXYPEPTIDASE"/>
    <property type="match status" value="1"/>
</dbReference>
<dbReference type="Pfam" id="PF05388">
    <property type="entry name" value="Carbpep_Y_N"/>
    <property type="match status" value="1"/>
</dbReference>
<dbReference type="Pfam" id="PF00450">
    <property type="entry name" value="Peptidase_S10"/>
    <property type="match status" value="1"/>
</dbReference>
<dbReference type="PRINTS" id="PR00724">
    <property type="entry name" value="CRBOXYPTASEC"/>
</dbReference>
<dbReference type="SUPFAM" id="SSF53474">
    <property type="entry name" value="alpha/beta-Hydrolases"/>
    <property type="match status" value="1"/>
</dbReference>
<dbReference type="PROSITE" id="PS00131">
    <property type="entry name" value="CARBOXYPEPT_SER_SER"/>
    <property type="match status" value="1"/>
</dbReference>
<evidence type="ECO:0000250" key="1"/>
<evidence type="ECO:0000255" key="2"/>
<evidence type="ECO:0000255" key="3">
    <source>
        <dbReference type="PROSITE-ProRule" id="PRU10074"/>
    </source>
</evidence>
<evidence type="ECO:0000256" key="4">
    <source>
        <dbReference type="SAM" id="MobiDB-lite"/>
    </source>
</evidence>
<evidence type="ECO:0000305" key="5"/>
<keyword id="KW-0121">Carboxypeptidase</keyword>
<keyword id="KW-1015">Disulfide bond</keyword>
<keyword id="KW-0325">Glycoprotein</keyword>
<keyword id="KW-0378">Hydrolase</keyword>
<keyword id="KW-0645">Protease</keyword>
<keyword id="KW-1185">Reference proteome</keyword>
<keyword id="KW-0732">Signal</keyword>
<keyword id="KW-0926">Vacuole</keyword>
<keyword id="KW-0865">Zymogen</keyword>
<reference key="1">
    <citation type="journal article" date="2011" name="PLoS Genet.">
        <title>Comparative genomic analysis of human fungal pathogens causing paracoccidioidomycosis.</title>
        <authorList>
            <person name="Desjardins C.A."/>
            <person name="Champion M.D."/>
            <person name="Holder J.W."/>
            <person name="Muszewska A."/>
            <person name="Goldberg J."/>
            <person name="Bailao A.M."/>
            <person name="Brigido M.M."/>
            <person name="Ferreira M.E."/>
            <person name="Garcia A.M."/>
            <person name="Grynberg M."/>
            <person name="Gujja S."/>
            <person name="Heiman D.I."/>
            <person name="Henn M.R."/>
            <person name="Kodira C.D."/>
            <person name="Leon-Narvaez H."/>
            <person name="Longo L.V.G."/>
            <person name="Ma L.-J."/>
            <person name="Malavazi I."/>
            <person name="Matsuo A.L."/>
            <person name="Morais F.V."/>
            <person name="Pereira M."/>
            <person name="Rodriguez-Brito S."/>
            <person name="Sakthikumar S."/>
            <person name="Salem-Izacc S.M."/>
            <person name="Sykes S.M."/>
            <person name="Teixeira M.M."/>
            <person name="Vallejo M.C."/>
            <person name="Walter M.E."/>
            <person name="Yandava C."/>
            <person name="Young S."/>
            <person name="Zeng Q."/>
            <person name="Zucker J."/>
            <person name="Felipe M.S."/>
            <person name="Goldman G.H."/>
            <person name="Haas B.J."/>
            <person name="McEwen J.G."/>
            <person name="Nino-Vega G."/>
            <person name="Puccia R."/>
            <person name="San-Blas G."/>
            <person name="Soares C.M."/>
            <person name="Birren B.W."/>
            <person name="Cuomo C.A."/>
        </authorList>
    </citation>
    <scope>NUCLEOTIDE SEQUENCE [LARGE SCALE GENOMIC DNA]</scope>
    <source>
        <strain>Pb18</strain>
    </source>
</reference>
<comment type="function">
    <text evidence="1">Vacuolar carboxypeptidase involved in degradation of small peptides. Digests preferentially peptides containing an aliphatic or hydrophobic residue in P1' position, as well as methionine, leucine or phenylalanine in P1 position of ester substrate (By similarity).</text>
</comment>
<comment type="catalytic activity">
    <reaction evidence="3">
        <text>Release of a C-terminal amino acid with broad specificity.</text>
        <dbReference type="EC" id="3.4.16.5"/>
    </reaction>
</comment>
<comment type="subcellular location">
    <subcellularLocation>
        <location evidence="1">Vacuole</location>
    </subcellularLocation>
</comment>
<comment type="similarity">
    <text evidence="5">Belongs to the peptidase S10 family.</text>
</comment>
<gene>
    <name type="primary">CPYA</name>
    <name type="ORF">PADG_06314</name>
</gene>
<name>CBPYA_PARBD</name>
<proteinExistence type="inferred from homology"/>
<protein>
    <recommendedName>
        <fullName>Carboxypeptidase Y homolog A</fullName>
        <ecNumber>3.4.16.5</ecNumber>
    </recommendedName>
</protein>